<organism>
    <name type="scientific">Rattus norvegicus</name>
    <name type="common">Rat</name>
    <dbReference type="NCBI Taxonomy" id="10116"/>
    <lineage>
        <taxon>Eukaryota</taxon>
        <taxon>Metazoa</taxon>
        <taxon>Chordata</taxon>
        <taxon>Craniata</taxon>
        <taxon>Vertebrata</taxon>
        <taxon>Euteleostomi</taxon>
        <taxon>Mammalia</taxon>
        <taxon>Eutheria</taxon>
        <taxon>Euarchontoglires</taxon>
        <taxon>Glires</taxon>
        <taxon>Rodentia</taxon>
        <taxon>Myomorpha</taxon>
        <taxon>Muroidea</taxon>
        <taxon>Muridae</taxon>
        <taxon>Murinae</taxon>
        <taxon>Rattus</taxon>
    </lineage>
</organism>
<dbReference type="EMBL" id="M38653">
    <property type="protein sequence ID" value="AAA41919.1"/>
    <property type="molecule type" value="mRNA"/>
</dbReference>
<dbReference type="EMBL" id="M25459">
    <property type="protein sequence ID" value="AAA41195.1"/>
    <property type="molecule type" value="mRNA"/>
</dbReference>
<dbReference type="PIR" id="A40910">
    <property type="entry name" value="A40910"/>
</dbReference>
<dbReference type="RefSeq" id="NP_036981.1">
    <property type="nucleotide sequence ID" value="NM_012849.1"/>
</dbReference>
<dbReference type="RefSeq" id="XP_017452526.1">
    <property type="nucleotide sequence ID" value="XM_017597037.3"/>
</dbReference>
<dbReference type="STRING" id="10116.ENSRNOP00000019863"/>
<dbReference type="iPTMnet" id="P04563"/>
<dbReference type="PhosphoSitePlus" id="P04563"/>
<dbReference type="PaxDb" id="10116-ENSRNOP00000019863"/>
<dbReference type="Ensembl" id="ENSRNOT00000019863.3">
    <property type="protein sequence ID" value="ENSRNOP00000019863.1"/>
    <property type="gene ID" value="ENSRNOG00000014740.3"/>
</dbReference>
<dbReference type="GeneID" id="25320"/>
<dbReference type="KEGG" id="rno:25320"/>
<dbReference type="UCSC" id="RGD:2662">
    <property type="organism name" value="rat"/>
</dbReference>
<dbReference type="AGR" id="RGD:2662"/>
<dbReference type="CTD" id="2520"/>
<dbReference type="RGD" id="2662">
    <property type="gene designation" value="Gast"/>
</dbReference>
<dbReference type="eggNOG" id="ENOG502SA9S">
    <property type="taxonomic scope" value="Eukaryota"/>
</dbReference>
<dbReference type="GeneTree" id="ENSGT00390000014792"/>
<dbReference type="HOGENOM" id="CLU_2249245_0_0_1"/>
<dbReference type="InParanoid" id="P04563"/>
<dbReference type="OMA" id="WKPRSQL"/>
<dbReference type="OrthoDB" id="9924917at2759"/>
<dbReference type="PhylomeDB" id="P04563"/>
<dbReference type="TreeFam" id="TF336994"/>
<dbReference type="Reactome" id="R-RNO-416476">
    <property type="pathway name" value="G alpha (q) signalling events"/>
</dbReference>
<dbReference type="Reactome" id="R-RNO-881907">
    <property type="pathway name" value="Gastrin-CREB signalling pathway via PKC and MAPK"/>
</dbReference>
<dbReference type="PRO" id="PR:P04563"/>
<dbReference type="Proteomes" id="UP000002494">
    <property type="component" value="Chromosome 10"/>
</dbReference>
<dbReference type="Bgee" id="ENSRNOG00000014740">
    <property type="expression patterns" value="Expressed in stomach and 10 other cell types or tissues"/>
</dbReference>
<dbReference type="GO" id="GO:0005615">
    <property type="term" value="C:extracellular space"/>
    <property type="evidence" value="ECO:0000318"/>
    <property type="project" value="GO_Central"/>
</dbReference>
<dbReference type="GO" id="GO:0005179">
    <property type="term" value="F:hormone activity"/>
    <property type="evidence" value="ECO:0000314"/>
    <property type="project" value="RGD"/>
</dbReference>
<dbReference type="GO" id="GO:0007186">
    <property type="term" value="P:G protein-coupled receptor signaling pathway"/>
    <property type="evidence" value="ECO:0000314"/>
    <property type="project" value="RGD"/>
</dbReference>
<dbReference type="GO" id="GO:0032094">
    <property type="term" value="P:response to food"/>
    <property type="evidence" value="ECO:0000318"/>
    <property type="project" value="GO_Central"/>
</dbReference>
<dbReference type="InterPro" id="IPR039236">
    <property type="entry name" value="GAST"/>
</dbReference>
<dbReference type="InterPro" id="IPR001651">
    <property type="entry name" value="Gastrin/CCK"/>
</dbReference>
<dbReference type="InterPro" id="IPR013152">
    <property type="entry name" value="Gastrin/cholecystokinin_CS"/>
</dbReference>
<dbReference type="PANTHER" id="PTHR19309">
    <property type="entry name" value="GASTRIN"/>
    <property type="match status" value="1"/>
</dbReference>
<dbReference type="PANTHER" id="PTHR19309:SF0">
    <property type="entry name" value="GASTRIN"/>
    <property type="match status" value="1"/>
</dbReference>
<dbReference type="Pfam" id="PF00918">
    <property type="entry name" value="Gastrin"/>
    <property type="match status" value="1"/>
</dbReference>
<dbReference type="SMART" id="SM00029">
    <property type="entry name" value="GASTRIN"/>
    <property type="match status" value="1"/>
</dbReference>
<dbReference type="PROSITE" id="PS00259">
    <property type="entry name" value="GASTRIN"/>
    <property type="match status" value="1"/>
</dbReference>
<feature type="signal peptide" evidence="4">
    <location>
        <begin position="1"/>
        <end position="21"/>
    </location>
</feature>
<feature type="propeptide" id="PRO_0000010648">
    <location>
        <begin position="22"/>
        <end position="58"/>
    </location>
</feature>
<feature type="peptide" id="PRO_0000010649" description="Big gastrin">
    <location>
        <begin position="59"/>
        <end position="92"/>
    </location>
</feature>
<feature type="peptide" id="PRO_0000010650" description="Gastrin">
    <location>
        <begin position="76"/>
        <end position="92"/>
    </location>
</feature>
<feature type="propeptide" id="PRO_0000010651">
    <location>
        <begin position="96"/>
        <end position="104"/>
    </location>
</feature>
<feature type="region of interest" description="Disordered" evidence="2">
    <location>
        <begin position="23"/>
        <end position="104"/>
    </location>
</feature>
<feature type="compositionally biased region" description="Polar residues" evidence="2">
    <location>
        <begin position="25"/>
        <end position="37"/>
    </location>
</feature>
<feature type="modified residue" description="Sulfotyrosine" evidence="3">
    <location>
        <position position="87"/>
    </location>
</feature>
<feature type="modified residue" description="Phenylalanine amide" evidence="3">
    <location>
        <position position="92"/>
    </location>
</feature>
<feature type="modified residue" description="Phosphoserine" evidence="3">
    <location>
        <position position="96"/>
    </location>
</feature>
<feature type="modified residue" description="Sulfotyrosine" evidence="3">
    <location>
        <position position="103"/>
    </location>
</feature>
<name>GAST_RAT</name>
<evidence type="ECO:0000250" key="1"/>
<evidence type="ECO:0000256" key="2">
    <source>
        <dbReference type="SAM" id="MobiDB-lite"/>
    </source>
</evidence>
<evidence type="ECO:0000269" key="3">
    <source>
    </source>
</evidence>
<evidence type="ECO:0000305" key="4"/>
<proteinExistence type="evidence at protein level"/>
<keyword id="KW-0027">Amidation</keyword>
<keyword id="KW-0165">Cleavage on pair of basic residues</keyword>
<keyword id="KW-0372">Hormone</keyword>
<keyword id="KW-0597">Phosphoprotein</keyword>
<keyword id="KW-1185">Reference proteome</keyword>
<keyword id="KW-0964">Secreted</keyword>
<keyword id="KW-0732">Signal</keyword>
<keyword id="KW-0765">Sulfation</keyword>
<comment type="function">
    <text>Gastrin stimulates the stomach mucosa to produce and secrete hydrochloric acid and the pancreas to secrete its digestive enzymes. It also stimulates smooth muscle contraction and increases blood circulation and water secretion in the stomach and intestine.</text>
</comment>
<comment type="subcellular location">
    <subcellularLocation>
        <location>Secreted</location>
    </subcellularLocation>
</comment>
<comment type="PTM">
    <text evidence="1">Sulfation on Tyr-87 enhances proteolytic processing, and blocks peptide degradation. Levels of sulfation differ between proteolytically-cleaved gastrins and between tissues (By similarity).</text>
</comment>
<comment type="similarity">
    <text evidence="4">Belongs to the gastrin/cholecystokinin family.</text>
</comment>
<accession>P04563</accession>
<reference key="1">
    <citation type="journal article" date="1987" name="Mol. Endocrinol.">
        <title>Molecular cloning and sequencing of a rat preprogastrin complementary deoxyribonucleic acid.</title>
        <authorList>
            <person name="Fuller P.J."/>
            <person name="Stone D.L."/>
            <person name="Brand S.J."/>
        </authorList>
    </citation>
    <scope>NUCLEOTIDE SEQUENCE [MRNA]</scope>
    <source>
        <tissue>Gastric antrum</tissue>
    </source>
</reference>
<reference key="2">
    <citation type="journal article" date="1982" name="Peptides">
        <title>Rat gastrin's amino acid sequence determined from the nucleotide sequence of the mRNA.</title>
        <authorList>
            <person name="Schaffer M.H."/>
            <person name="Agarwal K.L."/>
            <person name="Noyes B.E."/>
        </authorList>
    </citation>
    <scope>NUCLEOTIDE SEQUENCE [MRNA] OF 56-92</scope>
</reference>
<reference key="3">
    <citation type="journal article" date="1990" name="J. Biol. Chem.">
        <title>Processing of the gastrin precursor. Modulation of phosphorylated, sulfated, and amidated products.</title>
        <authorList>
            <person name="Varro A."/>
            <person name="Nemeth J."/>
            <person name="Bridson J."/>
            <person name="Lee C."/>
            <person name="Moore S."/>
            <person name="Dockray G.J."/>
        </authorList>
    </citation>
    <scope>PROTEOLYTIC PROCESSING</scope>
    <scope>PHOSPHORYLATION AT SER-96</scope>
    <scope>SULFATION AT TYR-87 AND TYR-103</scope>
    <scope>AMIDATION AT PHE-92</scope>
</reference>
<gene>
    <name type="primary">Gast</name>
    <name type="synonym">Gas</name>
</gene>
<sequence length="104" mass="11832">MPRLCVCMLVLVLALATFSEASWKPRSQLQDASSGPRTNGALEQHQLEKLGPASHHRRQLGPQGPQHFIADLSKKQRPPMEEEEEAYGWMDFGRRSAEEEDQYN</sequence>
<protein>
    <recommendedName>
        <fullName>Gastrin</fullName>
    </recommendedName>
    <component>
        <recommendedName>
            <fullName>Big gastrin</fullName>
        </recommendedName>
        <alternativeName>
            <fullName>Gastrin-34</fullName>
            <shortName>G34</shortName>
        </alternativeName>
    </component>
    <component>
        <recommendedName>
            <fullName>Gastrin</fullName>
        </recommendedName>
    </component>
</protein>